<evidence type="ECO:0000255" key="1"/>
<evidence type="ECO:0000269" key="2">
    <source>
    </source>
</evidence>
<evidence type="ECO:0000305" key="3"/>
<organism>
    <name type="scientific">Sparus aurata</name>
    <name type="common">Gilthead sea bream</name>
    <dbReference type="NCBI Taxonomy" id="8175"/>
    <lineage>
        <taxon>Eukaryota</taxon>
        <taxon>Metazoa</taxon>
        <taxon>Chordata</taxon>
        <taxon>Craniata</taxon>
        <taxon>Vertebrata</taxon>
        <taxon>Euteleostomi</taxon>
        <taxon>Actinopterygii</taxon>
        <taxon>Neopterygii</taxon>
        <taxon>Teleostei</taxon>
        <taxon>Neoteleostei</taxon>
        <taxon>Acanthomorphata</taxon>
        <taxon>Eupercaria</taxon>
        <taxon>Spariformes</taxon>
        <taxon>Sparidae</taxon>
        <taxon>Sparus</taxon>
    </lineage>
</organism>
<keyword id="KW-0027">Amidation</keyword>
<keyword id="KW-0165">Cleavage on pair of basic residues</keyword>
<keyword id="KW-0903">Direct protein sequencing</keyword>
<keyword id="KW-0372">Hormone</keyword>
<keyword id="KW-0873">Pyrrolidone carboxylic acid</keyword>
<keyword id="KW-1185">Reference proteome</keyword>
<keyword id="KW-0964">Secreted</keyword>
<keyword id="KW-0732">Signal</keyword>
<dbReference type="EMBL" id="U30320">
    <property type="protein sequence ID" value="AAA75469.1"/>
    <property type="molecule type" value="mRNA"/>
</dbReference>
<dbReference type="InParanoid" id="P51919"/>
<dbReference type="Proteomes" id="UP000472265">
    <property type="component" value="Unplaced"/>
</dbReference>
<dbReference type="GO" id="GO:0005615">
    <property type="term" value="C:extracellular space"/>
    <property type="evidence" value="ECO:0000250"/>
    <property type="project" value="UniProtKB"/>
</dbReference>
<dbReference type="GO" id="GO:0005179">
    <property type="term" value="F:hormone activity"/>
    <property type="evidence" value="ECO:0007669"/>
    <property type="project" value="UniProtKB-KW"/>
</dbReference>
<dbReference type="InterPro" id="IPR002012">
    <property type="entry name" value="GnRH"/>
</dbReference>
<dbReference type="InterPro" id="IPR019792">
    <property type="entry name" value="Gonadoliberin"/>
</dbReference>
<dbReference type="PANTHER" id="PTHR10522">
    <property type="entry name" value="GONADOLIBERIN"/>
    <property type="match status" value="1"/>
</dbReference>
<dbReference type="PANTHER" id="PTHR10522:SF5">
    <property type="entry name" value="PREPROGONADOTROPIN-RELEASING HORMONE 2"/>
    <property type="match status" value="1"/>
</dbReference>
<dbReference type="PROSITE" id="PS00473">
    <property type="entry name" value="GNRH"/>
    <property type="match status" value="1"/>
</dbReference>
<sequence>MAPQTSNLWILLLLVVVMMMSQGCCQHWSYGLSPGGKRDLDSLSDTLGNIIERFPHVDSPCSVLGCVEEPHVPRMYRMKGFIGSERDIGHRMYKK</sequence>
<reference key="1">
    <citation type="journal article" date="1995" name="Mol. Mar. Biol. Biotechnol.">
        <title>Molecular cloning and characterization of a novel gonadotropin-releasing hormone from the gilthead seabream (Sparus aurata).</title>
        <authorList>
            <person name="Gothilf Y."/>
            <person name="Elizur A."/>
            <person name="Chow M."/>
            <person name="Chen T.T."/>
            <person name="Zohar Y."/>
        </authorList>
    </citation>
    <scope>NUCLEOTIDE SEQUENCE [MRNA]</scope>
    <source>
        <tissue>Brain</tissue>
    </source>
</reference>
<reference key="2">
    <citation type="journal article" date="1994" name="Proc. Natl. Acad. Sci. U.S.A.">
        <title>Three forms of gonadotropin-releasing hormone characterized from brains of one species.</title>
        <authorList>
            <person name="Powell J.F.F."/>
            <person name="Zohar Y."/>
            <person name="Elizur A."/>
            <person name="Park M."/>
            <person name="Fischer W.H."/>
            <person name="Craig A.G."/>
            <person name="Rivier J.E."/>
            <person name="Lovejoy D.A."/>
            <person name="Sherwood N.M."/>
        </authorList>
    </citation>
    <scope>PROTEIN SEQUENCE OF 26-35</scope>
    <scope>PYROGLUTAMATE FORMATION AT GLN-26</scope>
    <scope>AMIDATION AT GLY-35</scope>
    <scope>MASS SPECTROMETRY</scope>
    <source>
        <tissue>Brain</tissue>
    </source>
</reference>
<feature type="signal peptide" evidence="2">
    <location>
        <begin position="1"/>
        <end position="25"/>
    </location>
</feature>
<feature type="chain" id="PRO_0000012444" description="Progonadoliberin-1">
    <location>
        <begin position="26"/>
        <end position="95"/>
    </location>
</feature>
<feature type="peptide" id="PRO_0000012445" description="Gonadoliberin-1">
    <location>
        <begin position="26"/>
        <end position="35"/>
    </location>
</feature>
<feature type="peptide" id="PRO_0000012446" description="GnRH-associated peptide 1" evidence="1">
    <location>
        <begin position="39"/>
        <end position="95"/>
    </location>
</feature>
<feature type="modified residue" description="Pyrrolidone carboxylic acid" evidence="2">
    <location>
        <position position="26"/>
    </location>
</feature>
<feature type="modified residue" description="Glycine amide" evidence="2">
    <location>
        <position position="35"/>
    </location>
</feature>
<gene>
    <name type="primary">gnrh1</name>
</gene>
<comment type="function">
    <text>Stimulates the secretion of gonadotropins.</text>
</comment>
<comment type="subcellular location">
    <subcellularLocation>
        <location>Secreted</location>
    </subcellularLocation>
</comment>
<comment type="mass spectrometry">
    <molecule>Gonadoliberin-1</molecule>
</comment>
<comment type="similarity">
    <text evidence="3">Belongs to the GnRH family.</text>
</comment>
<proteinExistence type="evidence at protein level"/>
<protein>
    <recommendedName>
        <fullName>Progonadoliberin-1</fullName>
    </recommendedName>
    <alternativeName>
        <fullName>Progonadoliberin I</fullName>
    </alternativeName>
    <component>
        <recommendedName>
            <fullName>Gonadoliberin-1</fullName>
        </recommendedName>
        <alternativeName>
            <fullName>Gonadoliberin I</fullName>
        </alternativeName>
        <alternativeName>
            <fullName>Gonadotropin-releasing hormone I</fullName>
            <shortName>GnRH-I</shortName>
        </alternativeName>
        <alternativeName>
            <fullName>Luliberin I</fullName>
        </alternativeName>
        <alternativeName>
            <fullName>Luteinizing hormone-releasing hormone I</fullName>
            <shortName>LH-RH I</shortName>
        </alternativeName>
    </component>
    <component>
        <recommendedName>
            <fullName>GnRH-associated peptide 1</fullName>
        </recommendedName>
        <alternativeName>
            <fullName>GnRH-associated peptide I</fullName>
        </alternativeName>
    </component>
</protein>
<accession>P51919</accession>
<name>GON1_SPAAU</name>